<evidence type="ECO:0000255" key="1">
    <source>
        <dbReference type="HAMAP-Rule" id="MF_00508"/>
    </source>
</evidence>
<evidence type="ECO:0000305" key="2"/>
<reference key="1">
    <citation type="submission" date="2008-05" db="EMBL/GenBank/DDBJ databases">
        <title>Genome sequence of Clostridium botulinum Ba4 strain 657.</title>
        <authorList>
            <person name="Shrivastava S."/>
            <person name="Brown J.L."/>
            <person name="Bruce D."/>
            <person name="Detter C."/>
            <person name="Munk C."/>
            <person name="Smith L.A."/>
            <person name="Smith T.J."/>
            <person name="Sutton G."/>
            <person name="Brettin T.S."/>
        </authorList>
    </citation>
    <scope>NUCLEOTIDE SEQUENCE [LARGE SCALE GENOMIC DNA]</scope>
    <source>
        <strain>657 / Type Ba4</strain>
    </source>
</reference>
<gene>
    <name evidence="1" type="primary">rpsJ</name>
    <name type="ordered locus">CLJ_B3790</name>
</gene>
<sequence length="102" mass="11434">MAKQKIRIRLKAFDHSLLDQSALKIVETAKTTGAKVAGPVPLPTEKDIVTILRAPHKYKDAREQFEIRTHKRLIDIISPSPKTVDALMRLDLPAGVDIEIKL</sequence>
<proteinExistence type="inferred from homology"/>
<comment type="function">
    <text evidence="1">Involved in the binding of tRNA to the ribosomes.</text>
</comment>
<comment type="subunit">
    <text evidence="1">Part of the 30S ribosomal subunit.</text>
</comment>
<comment type="similarity">
    <text evidence="1">Belongs to the universal ribosomal protein uS10 family.</text>
</comment>
<organism>
    <name type="scientific">Clostridium botulinum (strain 657 / Type Ba4)</name>
    <dbReference type="NCBI Taxonomy" id="515621"/>
    <lineage>
        <taxon>Bacteria</taxon>
        <taxon>Bacillati</taxon>
        <taxon>Bacillota</taxon>
        <taxon>Clostridia</taxon>
        <taxon>Eubacteriales</taxon>
        <taxon>Clostridiaceae</taxon>
        <taxon>Clostridium</taxon>
    </lineage>
</organism>
<feature type="chain" id="PRO_1000206577" description="Small ribosomal subunit protein uS10">
    <location>
        <begin position="1"/>
        <end position="102"/>
    </location>
</feature>
<protein>
    <recommendedName>
        <fullName evidence="1">Small ribosomal subunit protein uS10</fullName>
    </recommendedName>
    <alternativeName>
        <fullName evidence="2">30S ribosomal protein S10</fullName>
    </alternativeName>
</protein>
<keyword id="KW-0687">Ribonucleoprotein</keyword>
<keyword id="KW-0689">Ribosomal protein</keyword>
<dbReference type="EMBL" id="CP001083">
    <property type="protein sequence ID" value="ACQ55179.1"/>
    <property type="molecule type" value="Genomic_DNA"/>
</dbReference>
<dbReference type="RefSeq" id="WP_003357250.1">
    <property type="nucleotide sequence ID" value="NC_012658.1"/>
</dbReference>
<dbReference type="SMR" id="C3KVQ2"/>
<dbReference type="GeneID" id="92940251"/>
<dbReference type="KEGG" id="cbi:CLJ_B3790"/>
<dbReference type="HOGENOM" id="CLU_122625_1_3_9"/>
<dbReference type="Proteomes" id="UP000002333">
    <property type="component" value="Chromosome"/>
</dbReference>
<dbReference type="GO" id="GO:1990904">
    <property type="term" value="C:ribonucleoprotein complex"/>
    <property type="evidence" value="ECO:0007669"/>
    <property type="project" value="UniProtKB-KW"/>
</dbReference>
<dbReference type="GO" id="GO:0005840">
    <property type="term" value="C:ribosome"/>
    <property type="evidence" value="ECO:0007669"/>
    <property type="project" value="UniProtKB-KW"/>
</dbReference>
<dbReference type="GO" id="GO:0003735">
    <property type="term" value="F:structural constituent of ribosome"/>
    <property type="evidence" value="ECO:0007669"/>
    <property type="project" value="InterPro"/>
</dbReference>
<dbReference type="GO" id="GO:0000049">
    <property type="term" value="F:tRNA binding"/>
    <property type="evidence" value="ECO:0007669"/>
    <property type="project" value="UniProtKB-UniRule"/>
</dbReference>
<dbReference type="GO" id="GO:0006412">
    <property type="term" value="P:translation"/>
    <property type="evidence" value="ECO:0007669"/>
    <property type="project" value="UniProtKB-UniRule"/>
</dbReference>
<dbReference type="FunFam" id="3.30.70.600:FF:000001">
    <property type="entry name" value="30S ribosomal protein S10"/>
    <property type="match status" value="1"/>
</dbReference>
<dbReference type="Gene3D" id="3.30.70.600">
    <property type="entry name" value="Ribosomal protein S10 domain"/>
    <property type="match status" value="1"/>
</dbReference>
<dbReference type="HAMAP" id="MF_00508">
    <property type="entry name" value="Ribosomal_uS10"/>
    <property type="match status" value="1"/>
</dbReference>
<dbReference type="InterPro" id="IPR001848">
    <property type="entry name" value="Ribosomal_uS10"/>
</dbReference>
<dbReference type="InterPro" id="IPR018268">
    <property type="entry name" value="Ribosomal_uS10_CS"/>
</dbReference>
<dbReference type="InterPro" id="IPR027486">
    <property type="entry name" value="Ribosomal_uS10_dom"/>
</dbReference>
<dbReference type="InterPro" id="IPR036838">
    <property type="entry name" value="Ribosomal_uS10_dom_sf"/>
</dbReference>
<dbReference type="NCBIfam" id="NF001861">
    <property type="entry name" value="PRK00596.1"/>
    <property type="match status" value="1"/>
</dbReference>
<dbReference type="NCBIfam" id="TIGR01049">
    <property type="entry name" value="rpsJ_bact"/>
    <property type="match status" value="1"/>
</dbReference>
<dbReference type="PANTHER" id="PTHR11700">
    <property type="entry name" value="30S RIBOSOMAL PROTEIN S10 FAMILY MEMBER"/>
    <property type="match status" value="1"/>
</dbReference>
<dbReference type="Pfam" id="PF00338">
    <property type="entry name" value="Ribosomal_S10"/>
    <property type="match status" value="1"/>
</dbReference>
<dbReference type="PRINTS" id="PR00971">
    <property type="entry name" value="RIBOSOMALS10"/>
</dbReference>
<dbReference type="SMART" id="SM01403">
    <property type="entry name" value="Ribosomal_S10"/>
    <property type="match status" value="1"/>
</dbReference>
<dbReference type="SUPFAM" id="SSF54999">
    <property type="entry name" value="Ribosomal protein S10"/>
    <property type="match status" value="1"/>
</dbReference>
<dbReference type="PROSITE" id="PS00361">
    <property type="entry name" value="RIBOSOMAL_S10"/>
    <property type="match status" value="1"/>
</dbReference>
<accession>C3KVQ2</accession>
<name>RS10_CLOB6</name>